<evidence type="ECO:0000255" key="1">
    <source>
        <dbReference type="HAMAP-Rule" id="MF_01320"/>
    </source>
</evidence>
<evidence type="ECO:0000256" key="2">
    <source>
        <dbReference type="SAM" id="MobiDB-lite"/>
    </source>
</evidence>
<evidence type="ECO:0000305" key="3"/>
<comment type="function">
    <text evidence="1">One of the primary rRNA binding proteins. Required for association of the 30S and 50S subunits to form the 70S ribosome, for tRNA binding and peptide bond formation. It has been suggested to have peptidyltransferase activity; this is somewhat controversial. Makes several contacts with the 16S rRNA in the 70S ribosome.</text>
</comment>
<comment type="subunit">
    <text evidence="1">Part of the 50S ribosomal subunit. Forms a bridge to the 30S subunit in the 70S ribosome.</text>
</comment>
<comment type="similarity">
    <text evidence="1">Belongs to the universal ribosomal protein uL2 family.</text>
</comment>
<protein>
    <recommendedName>
        <fullName evidence="1">Large ribosomal subunit protein uL2</fullName>
    </recommendedName>
    <alternativeName>
        <fullName evidence="3">50S ribosomal protein L2</fullName>
    </alternativeName>
</protein>
<proteinExistence type="inferred from homology"/>
<reference key="1">
    <citation type="journal article" date="2006" name="DNA Res.">
        <title>Genome sequence of the cat pathogen, Chlamydophila felis.</title>
        <authorList>
            <person name="Azuma Y."/>
            <person name="Hirakawa H."/>
            <person name="Yamashita A."/>
            <person name="Cai Y."/>
            <person name="Rahman M.A."/>
            <person name="Suzuki H."/>
            <person name="Mitaku S."/>
            <person name="Toh H."/>
            <person name="Goto S."/>
            <person name="Murakami T."/>
            <person name="Sugi K."/>
            <person name="Hayashi H."/>
            <person name="Fukushi H."/>
            <person name="Hattori M."/>
            <person name="Kuhara S."/>
            <person name="Shirai M."/>
        </authorList>
    </citation>
    <scope>NUCLEOTIDE SEQUENCE [LARGE SCALE GENOMIC DNA]</scope>
    <source>
        <strain>Fe/C-56</strain>
    </source>
</reference>
<feature type="chain" id="PRO_0000309894" description="Large ribosomal subunit protein uL2">
    <location>
        <begin position="1"/>
        <end position="284"/>
    </location>
</feature>
<feature type="region of interest" description="Disordered" evidence="2">
    <location>
        <begin position="232"/>
        <end position="284"/>
    </location>
</feature>
<feature type="compositionally biased region" description="Basic and acidic residues" evidence="2">
    <location>
        <begin position="240"/>
        <end position="250"/>
    </location>
</feature>
<feature type="compositionally biased region" description="Basic residues" evidence="2">
    <location>
        <begin position="264"/>
        <end position="284"/>
    </location>
</feature>
<dbReference type="EMBL" id="AP006861">
    <property type="protein sequence ID" value="BAE81682.1"/>
    <property type="molecule type" value="Genomic_DNA"/>
</dbReference>
<dbReference type="RefSeq" id="WP_011458455.1">
    <property type="nucleotide sequence ID" value="NC_007899.1"/>
</dbReference>
<dbReference type="SMR" id="Q252V6"/>
<dbReference type="STRING" id="264202.CF0910"/>
<dbReference type="KEGG" id="cfe:CF0910"/>
<dbReference type="eggNOG" id="COG0090">
    <property type="taxonomic scope" value="Bacteria"/>
</dbReference>
<dbReference type="HOGENOM" id="CLU_036235_2_1_0"/>
<dbReference type="OrthoDB" id="9778722at2"/>
<dbReference type="Proteomes" id="UP000001260">
    <property type="component" value="Chromosome"/>
</dbReference>
<dbReference type="GO" id="GO:0015934">
    <property type="term" value="C:large ribosomal subunit"/>
    <property type="evidence" value="ECO:0007669"/>
    <property type="project" value="InterPro"/>
</dbReference>
<dbReference type="GO" id="GO:0019843">
    <property type="term" value="F:rRNA binding"/>
    <property type="evidence" value="ECO:0007669"/>
    <property type="project" value="UniProtKB-UniRule"/>
</dbReference>
<dbReference type="GO" id="GO:0003735">
    <property type="term" value="F:structural constituent of ribosome"/>
    <property type="evidence" value="ECO:0007669"/>
    <property type="project" value="InterPro"/>
</dbReference>
<dbReference type="GO" id="GO:0016740">
    <property type="term" value="F:transferase activity"/>
    <property type="evidence" value="ECO:0007669"/>
    <property type="project" value="InterPro"/>
</dbReference>
<dbReference type="GO" id="GO:0002181">
    <property type="term" value="P:cytoplasmic translation"/>
    <property type="evidence" value="ECO:0007669"/>
    <property type="project" value="TreeGrafter"/>
</dbReference>
<dbReference type="FunFam" id="2.30.30.30:FF:000001">
    <property type="entry name" value="50S ribosomal protein L2"/>
    <property type="match status" value="1"/>
</dbReference>
<dbReference type="FunFam" id="2.40.50.140:FF:000003">
    <property type="entry name" value="50S ribosomal protein L2"/>
    <property type="match status" value="1"/>
</dbReference>
<dbReference type="FunFam" id="4.10.950.10:FF:000001">
    <property type="entry name" value="50S ribosomal protein L2"/>
    <property type="match status" value="1"/>
</dbReference>
<dbReference type="Gene3D" id="2.30.30.30">
    <property type="match status" value="1"/>
</dbReference>
<dbReference type="Gene3D" id="2.40.50.140">
    <property type="entry name" value="Nucleic acid-binding proteins"/>
    <property type="match status" value="1"/>
</dbReference>
<dbReference type="Gene3D" id="4.10.950.10">
    <property type="entry name" value="Ribosomal protein L2, domain 3"/>
    <property type="match status" value="1"/>
</dbReference>
<dbReference type="HAMAP" id="MF_01320_B">
    <property type="entry name" value="Ribosomal_uL2_B"/>
    <property type="match status" value="1"/>
</dbReference>
<dbReference type="InterPro" id="IPR012340">
    <property type="entry name" value="NA-bd_OB-fold"/>
</dbReference>
<dbReference type="InterPro" id="IPR014722">
    <property type="entry name" value="Rib_uL2_dom2"/>
</dbReference>
<dbReference type="InterPro" id="IPR002171">
    <property type="entry name" value="Ribosomal_uL2"/>
</dbReference>
<dbReference type="InterPro" id="IPR005880">
    <property type="entry name" value="Ribosomal_uL2_bac/org-type"/>
</dbReference>
<dbReference type="InterPro" id="IPR022669">
    <property type="entry name" value="Ribosomal_uL2_C"/>
</dbReference>
<dbReference type="InterPro" id="IPR022671">
    <property type="entry name" value="Ribosomal_uL2_CS"/>
</dbReference>
<dbReference type="InterPro" id="IPR014726">
    <property type="entry name" value="Ribosomal_uL2_dom3"/>
</dbReference>
<dbReference type="InterPro" id="IPR022666">
    <property type="entry name" value="Ribosomal_uL2_RNA-bd_dom"/>
</dbReference>
<dbReference type="InterPro" id="IPR008991">
    <property type="entry name" value="Translation_prot_SH3-like_sf"/>
</dbReference>
<dbReference type="NCBIfam" id="TIGR01171">
    <property type="entry name" value="rplB_bact"/>
    <property type="match status" value="1"/>
</dbReference>
<dbReference type="PANTHER" id="PTHR13691:SF5">
    <property type="entry name" value="LARGE RIBOSOMAL SUBUNIT PROTEIN UL2M"/>
    <property type="match status" value="1"/>
</dbReference>
<dbReference type="PANTHER" id="PTHR13691">
    <property type="entry name" value="RIBOSOMAL PROTEIN L2"/>
    <property type="match status" value="1"/>
</dbReference>
<dbReference type="Pfam" id="PF00181">
    <property type="entry name" value="Ribosomal_L2"/>
    <property type="match status" value="1"/>
</dbReference>
<dbReference type="Pfam" id="PF03947">
    <property type="entry name" value="Ribosomal_L2_C"/>
    <property type="match status" value="1"/>
</dbReference>
<dbReference type="PIRSF" id="PIRSF002158">
    <property type="entry name" value="Ribosomal_L2"/>
    <property type="match status" value="1"/>
</dbReference>
<dbReference type="SMART" id="SM01383">
    <property type="entry name" value="Ribosomal_L2"/>
    <property type="match status" value="1"/>
</dbReference>
<dbReference type="SMART" id="SM01382">
    <property type="entry name" value="Ribosomal_L2_C"/>
    <property type="match status" value="1"/>
</dbReference>
<dbReference type="SUPFAM" id="SSF50249">
    <property type="entry name" value="Nucleic acid-binding proteins"/>
    <property type="match status" value="1"/>
</dbReference>
<dbReference type="SUPFAM" id="SSF50104">
    <property type="entry name" value="Translation proteins SH3-like domain"/>
    <property type="match status" value="1"/>
</dbReference>
<dbReference type="PROSITE" id="PS00467">
    <property type="entry name" value="RIBOSOMAL_L2"/>
    <property type="match status" value="1"/>
</dbReference>
<gene>
    <name evidence="1" type="primary">rplB</name>
    <name type="ordered locus">CF0910</name>
</gene>
<name>RL2_CHLFF</name>
<organism>
    <name type="scientific">Chlamydia felis (strain Fe/C-56)</name>
    <name type="common">Chlamydophila felis</name>
    <dbReference type="NCBI Taxonomy" id="264202"/>
    <lineage>
        <taxon>Bacteria</taxon>
        <taxon>Pseudomonadati</taxon>
        <taxon>Chlamydiota</taxon>
        <taxon>Chlamydiia</taxon>
        <taxon>Chlamydiales</taxon>
        <taxon>Chlamydiaceae</taxon>
        <taxon>Chlamydia/Chlamydophila group</taxon>
        <taxon>Chlamydia</taxon>
    </lineage>
</organism>
<sequence>MFKKFKPVTPGTRQLVLPAFDELTRQGDLTGKRTRKSVRPNKKLSFFKKSSGGRDNLGHISCRHRGGGAKRLYRVIDFKRNKDGIEAKVVSVEYDPNRSAYIALLNYADGEKRYILAPKGIKRGDQVISGEGSPFKLGCCMTLKSMPLGSTVHNIEMRPHSGGKLVRSAGLAAQVIAKTPGYVTLKMPSGEFRMLNEGCRATIGEVSNADHNLCVDGKAGRKRWKGVRPTVRGTAMNPVDHPHGGGEGRHNGYIPRTPWGKVTKGLKTRDKRKSNKWIVKDRRK</sequence>
<accession>Q252V6</accession>
<keyword id="KW-0687">Ribonucleoprotein</keyword>
<keyword id="KW-0689">Ribosomal protein</keyword>
<keyword id="KW-0694">RNA-binding</keyword>
<keyword id="KW-0699">rRNA-binding</keyword>